<dbReference type="EC" id="3.5.1.44" evidence="1"/>
<dbReference type="EMBL" id="AL646053">
    <property type="protein sequence ID" value="CAD18555.1"/>
    <property type="molecule type" value="Genomic_DNA"/>
</dbReference>
<dbReference type="SMR" id="Q8XQ82"/>
<dbReference type="STRING" id="267608.RSp1404"/>
<dbReference type="EnsemblBacteria" id="CAD18555">
    <property type="protein sequence ID" value="CAD18555"/>
    <property type="gene ID" value="RSp1404"/>
</dbReference>
<dbReference type="KEGG" id="rso:RSp1404"/>
<dbReference type="eggNOG" id="COG1871">
    <property type="taxonomic scope" value="Bacteria"/>
</dbReference>
<dbReference type="HOGENOM" id="CLU_087854_0_0_4"/>
<dbReference type="Proteomes" id="UP000001436">
    <property type="component" value="Plasmid megaplasmid Rsp"/>
</dbReference>
<dbReference type="GO" id="GO:0050568">
    <property type="term" value="F:protein-glutamine glutaminase activity"/>
    <property type="evidence" value="ECO:0007669"/>
    <property type="project" value="UniProtKB-UniRule"/>
</dbReference>
<dbReference type="GO" id="GO:0006935">
    <property type="term" value="P:chemotaxis"/>
    <property type="evidence" value="ECO:0007669"/>
    <property type="project" value="UniProtKB-UniRule"/>
</dbReference>
<dbReference type="CDD" id="cd16352">
    <property type="entry name" value="CheD"/>
    <property type="match status" value="1"/>
</dbReference>
<dbReference type="Gene3D" id="3.30.1330.200">
    <property type="match status" value="1"/>
</dbReference>
<dbReference type="HAMAP" id="MF_01440">
    <property type="entry name" value="CheD"/>
    <property type="match status" value="1"/>
</dbReference>
<dbReference type="InterPro" id="IPR038592">
    <property type="entry name" value="CheD-like_sf"/>
</dbReference>
<dbReference type="InterPro" id="IPR005659">
    <property type="entry name" value="Chemorcpt_Glu_NH3ase_CheD"/>
</dbReference>
<dbReference type="InterPro" id="IPR011324">
    <property type="entry name" value="Cytotoxic_necrot_fac-like_cat"/>
</dbReference>
<dbReference type="NCBIfam" id="NF010013">
    <property type="entry name" value="PRK13487.1"/>
    <property type="match status" value="1"/>
</dbReference>
<dbReference type="PANTHER" id="PTHR35147">
    <property type="entry name" value="CHEMORECEPTOR GLUTAMINE DEAMIDASE CHED-RELATED"/>
    <property type="match status" value="1"/>
</dbReference>
<dbReference type="PANTHER" id="PTHR35147:SF2">
    <property type="entry name" value="CHEMORECEPTOR GLUTAMINE DEAMIDASE CHED-RELATED"/>
    <property type="match status" value="1"/>
</dbReference>
<dbReference type="Pfam" id="PF03975">
    <property type="entry name" value="CheD"/>
    <property type="match status" value="1"/>
</dbReference>
<dbReference type="SUPFAM" id="SSF64438">
    <property type="entry name" value="CNF1/YfiH-like putative cysteine hydrolases"/>
    <property type="match status" value="1"/>
</dbReference>
<geneLocation type="plasmid">
    <name>megaplasmid Rsp</name>
</geneLocation>
<keyword id="KW-0145">Chemotaxis</keyword>
<keyword id="KW-0378">Hydrolase</keyword>
<keyword id="KW-0614">Plasmid</keyword>
<keyword id="KW-1185">Reference proteome</keyword>
<sequence>MIEFGKKAVPRAAMPDTVRSDSGMTAGAMATLAQSAASTHAYYDTTFSRRAMKVLPGEYYVTTEDLMLVTVLGSCVSACVRDKLLGIGGMNHFMLPSRNESESILSPSMRYGTHAMEVLLNQLYRAGARREHLEIKVFGGAAVLAGMSTLDVGERNGKFVLEFLRSEGLPVAAKDLFDVHPRKVYFVPSTGQIMVRKLRSQGSAAELDSEAQYASKLSRSIADKPASRLQLFT</sequence>
<accession>Q8XQ82</accession>
<organism>
    <name type="scientific">Ralstonia nicotianae (strain ATCC BAA-1114 / GMI1000)</name>
    <name type="common">Ralstonia solanacearum</name>
    <dbReference type="NCBI Taxonomy" id="267608"/>
    <lineage>
        <taxon>Bacteria</taxon>
        <taxon>Pseudomonadati</taxon>
        <taxon>Pseudomonadota</taxon>
        <taxon>Betaproteobacteria</taxon>
        <taxon>Burkholderiales</taxon>
        <taxon>Burkholderiaceae</taxon>
        <taxon>Ralstonia</taxon>
        <taxon>Ralstonia solanacearum species complex</taxon>
    </lineage>
</organism>
<reference key="1">
    <citation type="journal article" date="2002" name="Nature">
        <title>Genome sequence of the plant pathogen Ralstonia solanacearum.</title>
        <authorList>
            <person name="Salanoubat M."/>
            <person name="Genin S."/>
            <person name="Artiguenave F."/>
            <person name="Gouzy J."/>
            <person name="Mangenot S."/>
            <person name="Arlat M."/>
            <person name="Billault A."/>
            <person name="Brottier P."/>
            <person name="Camus J.-C."/>
            <person name="Cattolico L."/>
            <person name="Chandler M."/>
            <person name="Choisne N."/>
            <person name="Claudel-Renard C."/>
            <person name="Cunnac S."/>
            <person name="Demange N."/>
            <person name="Gaspin C."/>
            <person name="Lavie M."/>
            <person name="Moisan A."/>
            <person name="Robert C."/>
            <person name="Saurin W."/>
            <person name="Schiex T."/>
            <person name="Siguier P."/>
            <person name="Thebault P."/>
            <person name="Whalen M."/>
            <person name="Wincker P."/>
            <person name="Levy M."/>
            <person name="Weissenbach J."/>
            <person name="Boucher C.A."/>
        </authorList>
    </citation>
    <scope>NUCLEOTIDE SEQUENCE [LARGE SCALE GENOMIC DNA]</scope>
    <source>
        <strain>ATCC BAA-1114 / GMI1000</strain>
    </source>
</reference>
<name>CHED_RALN1</name>
<feature type="chain" id="PRO_0000251055" description="Probable chemoreceptor glutamine deamidase CheD">
    <location>
        <begin position="1"/>
        <end position="233"/>
    </location>
</feature>
<evidence type="ECO:0000255" key="1">
    <source>
        <dbReference type="HAMAP-Rule" id="MF_01440"/>
    </source>
</evidence>
<proteinExistence type="inferred from homology"/>
<gene>
    <name evidence="1" type="primary">cheD</name>
    <name type="ordered locus">RSp1404</name>
</gene>
<comment type="function">
    <text evidence="1">Probably deamidates glutamine residues to glutamate on methyl-accepting chemotaxis receptors (MCPs), playing an important role in chemotaxis.</text>
</comment>
<comment type="catalytic activity">
    <reaction evidence="1">
        <text>L-glutaminyl-[protein] + H2O = L-glutamyl-[protein] + NH4(+)</text>
        <dbReference type="Rhea" id="RHEA:16441"/>
        <dbReference type="Rhea" id="RHEA-COMP:10207"/>
        <dbReference type="Rhea" id="RHEA-COMP:10208"/>
        <dbReference type="ChEBI" id="CHEBI:15377"/>
        <dbReference type="ChEBI" id="CHEBI:28938"/>
        <dbReference type="ChEBI" id="CHEBI:29973"/>
        <dbReference type="ChEBI" id="CHEBI:30011"/>
        <dbReference type="EC" id="3.5.1.44"/>
    </reaction>
</comment>
<comment type="similarity">
    <text evidence="1">Belongs to the CheD family.</text>
</comment>
<protein>
    <recommendedName>
        <fullName evidence="1">Probable chemoreceptor glutamine deamidase CheD</fullName>
        <ecNumber evidence="1">3.5.1.44</ecNumber>
    </recommendedName>
</protein>